<feature type="chain" id="PRO_0000088596" description="Photosystem I P700 chlorophyll a apoprotein A1">
    <location>
        <begin position="1"/>
        <end position="739"/>
    </location>
</feature>
<feature type="transmembrane region" description="Helical; Name=I" evidence="1">
    <location>
        <begin position="61"/>
        <end position="84"/>
    </location>
</feature>
<feature type="transmembrane region" description="Helical; Name=II" evidence="1">
    <location>
        <begin position="147"/>
        <end position="170"/>
    </location>
</feature>
<feature type="transmembrane region" description="Helical; Name=III" evidence="1">
    <location>
        <begin position="186"/>
        <end position="210"/>
    </location>
</feature>
<feature type="transmembrane region" description="Helical; Name=IV" evidence="1">
    <location>
        <begin position="281"/>
        <end position="299"/>
    </location>
</feature>
<feature type="transmembrane region" description="Helical; Name=V" evidence="1">
    <location>
        <begin position="336"/>
        <end position="359"/>
    </location>
</feature>
<feature type="transmembrane region" description="Helical; Name=VI" evidence="1">
    <location>
        <begin position="375"/>
        <end position="401"/>
    </location>
</feature>
<feature type="transmembrane region" description="Helical; Name=VII" evidence="1">
    <location>
        <begin position="423"/>
        <end position="445"/>
    </location>
</feature>
<feature type="transmembrane region" description="Helical; Name=VIII" evidence="1">
    <location>
        <begin position="520"/>
        <end position="538"/>
    </location>
</feature>
<feature type="transmembrane region" description="Helical; Name=IX" evidence="1">
    <location>
        <begin position="578"/>
        <end position="599"/>
    </location>
</feature>
<feature type="transmembrane region" description="Helical; Name=X" evidence="1">
    <location>
        <begin position="653"/>
        <end position="675"/>
    </location>
</feature>
<feature type="transmembrane region" description="Helical; Name=XI" evidence="1">
    <location>
        <begin position="713"/>
        <end position="733"/>
    </location>
</feature>
<feature type="binding site" evidence="1">
    <location>
        <position position="562"/>
    </location>
    <ligand>
        <name>[4Fe-4S] cluster</name>
        <dbReference type="ChEBI" id="CHEBI:49883"/>
        <note>ligand shared between dimeric partners</note>
    </ligand>
</feature>
<feature type="binding site" evidence="1">
    <location>
        <position position="571"/>
    </location>
    <ligand>
        <name>[4Fe-4S] cluster</name>
        <dbReference type="ChEBI" id="CHEBI:49883"/>
        <note>ligand shared between dimeric partners</note>
    </ligand>
</feature>
<feature type="binding site" description="axial binding residue" evidence="1">
    <location>
        <position position="664"/>
    </location>
    <ligand>
        <name>chlorophyll a'</name>
        <dbReference type="ChEBI" id="CHEBI:189419"/>
        <label>A1</label>
    </ligand>
    <ligandPart>
        <name>Mg</name>
        <dbReference type="ChEBI" id="CHEBI:25107"/>
    </ligandPart>
</feature>
<feature type="binding site" description="axial binding residue" evidence="1">
    <location>
        <position position="672"/>
    </location>
    <ligand>
        <name>chlorophyll a</name>
        <dbReference type="ChEBI" id="CHEBI:58416"/>
        <label>A3</label>
    </ligand>
    <ligandPart>
        <name>Mg</name>
        <dbReference type="ChEBI" id="CHEBI:25107"/>
    </ligandPart>
</feature>
<feature type="binding site" evidence="1">
    <location>
        <position position="680"/>
    </location>
    <ligand>
        <name>chlorophyll a</name>
        <dbReference type="ChEBI" id="CHEBI:58416"/>
        <label>A3</label>
    </ligand>
</feature>
<feature type="binding site" evidence="1">
    <location>
        <position position="681"/>
    </location>
    <ligand>
        <name>phylloquinone</name>
        <dbReference type="ChEBI" id="CHEBI:18067"/>
        <label>A</label>
    </ligand>
</feature>
<evidence type="ECO:0000255" key="1">
    <source>
        <dbReference type="HAMAP-Rule" id="MF_00458"/>
    </source>
</evidence>
<dbReference type="EC" id="1.97.1.12" evidence="1"/>
<dbReference type="EMBL" id="M18165">
    <property type="protein sequence ID" value="AAA88632.1"/>
    <property type="molecule type" value="Genomic_DNA"/>
</dbReference>
<dbReference type="EMBL" id="CP000951">
    <property type="protein sequence ID" value="ACA99948.1"/>
    <property type="molecule type" value="Genomic_DNA"/>
</dbReference>
<dbReference type="PIR" id="S06397">
    <property type="entry name" value="S06397"/>
</dbReference>
<dbReference type="RefSeq" id="WP_012307571.1">
    <property type="nucleotide sequence ID" value="NZ_JAHHPU010000002.1"/>
</dbReference>
<dbReference type="SMR" id="P17154"/>
<dbReference type="STRING" id="32049.SYNPCC7002_A1961"/>
<dbReference type="KEGG" id="syp:SYNPCC7002_A1961"/>
<dbReference type="eggNOG" id="COG2885">
    <property type="taxonomic scope" value="Bacteria"/>
</dbReference>
<dbReference type="HOGENOM" id="CLU_016126_1_0_3"/>
<dbReference type="Proteomes" id="UP000001688">
    <property type="component" value="Chromosome"/>
</dbReference>
<dbReference type="GO" id="GO:0009522">
    <property type="term" value="C:photosystem I"/>
    <property type="evidence" value="ECO:0007669"/>
    <property type="project" value="UniProtKB-KW"/>
</dbReference>
<dbReference type="GO" id="GO:0031676">
    <property type="term" value="C:plasma membrane-derived thylakoid membrane"/>
    <property type="evidence" value="ECO:0007669"/>
    <property type="project" value="UniProtKB-SubCell"/>
</dbReference>
<dbReference type="GO" id="GO:0051539">
    <property type="term" value="F:4 iron, 4 sulfur cluster binding"/>
    <property type="evidence" value="ECO:0007669"/>
    <property type="project" value="UniProtKB-KW"/>
</dbReference>
<dbReference type="GO" id="GO:0016168">
    <property type="term" value="F:chlorophyll binding"/>
    <property type="evidence" value="ECO:0007669"/>
    <property type="project" value="UniProtKB-KW"/>
</dbReference>
<dbReference type="GO" id="GO:0009055">
    <property type="term" value="F:electron transfer activity"/>
    <property type="evidence" value="ECO:0007669"/>
    <property type="project" value="UniProtKB-UniRule"/>
</dbReference>
<dbReference type="GO" id="GO:0000287">
    <property type="term" value="F:magnesium ion binding"/>
    <property type="evidence" value="ECO:0007669"/>
    <property type="project" value="UniProtKB-UniRule"/>
</dbReference>
<dbReference type="GO" id="GO:0016491">
    <property type="term" value="F:oxidoreductase activity"/>
    <property type="evidence" value="ECO:0007669"/>
    <property type="project" value="UniProtKB-KW"/>
</dbReference>
<dbReference type="GO" id="GO:0015979">
    <property type="term" value="P:photosynthesis"/>
    <property type="evidence" value="ECO:0007669"/>
    <property type="project" value="UniProtKB-UniRule"/>
</dbReference>
<dbReference type="FunFam" id="1.20.1130.10:FF:000001">
    <property type="entry name" value="Photosystem I P700 chlorophyll a apoprotein A2"/>
    <property type="match status" value="1"/>
</dbReference>
<dbReference type="Gene3D" id="1.20.1130.10">
    <property type="entry name" value="Photosystem I PsaA/PsaB"/>
    <property type="match status" value="1"/>
</dbReference>
<dbReference type="HAMAP" id="MF_00458">
    <property type="entry name" value="PSI_PsaA"/>
    <property type="match status" value="1"/>
</dbReference>
<dbReference type="InterPro" id="IPR006243">
    <property type="entry name" value="PSI_PsaA"/>
</dbReference>
<dbReference type="InterPro" id="IPR001280">
    <property type="entry name" value="PSI_PsaA/B"/>
</dbReference>
<dbReference type="InterPro" id="IPR020586">
    <property type="entry name" value="PSI_PsaA/B_CS"/>
</dbReference>
<dbReference type="InterPro" id="IPR036408">
    <property type="entry name" value="PSI_PsaA/B_sf"/>
</dbReference>
<dbReference type="NCBIfam" id="TIGR01335">
    <property type="entry name" value="psaA"/>
    <property type="match status" value="1"/>
</dbReference>
<dbReference type="PANTHER" id="PTHR30128">
    <property type="entry name" value="OUTER MEMBRANE PROTEIN, OMPA-RELATED"/>
    <property type="match status" value="1"/>
</dbReference>
<dbReference type="PANTHER" id="PTHR30128:SF19">
    <property type="entry name" value="PHOTOSYSTEM I P700 CHLOROPHYLL A APOPROTEIN A1-RELATED"/>
    <property type="match status" value="1"/>
</dbReference>
<dbReference type="Pfam" id="PF00223">
    <property type="entry name" value="PsaA_PsaB"/>
    <property type="match status" value="1"/>
</dbReference>
<dbReference type="PIRSF" id="PIRSF002905">
    <property type="entry name" value="PSI_A"/>
    <property type="match status" value="1"/>
</dbReference>
<dbReference type="PRINTS" id="PR00257">
    <property type="entry name" value="PHOTSYSPSAAB"/>
</dbReference>
<dbReference type="SUPFAM" id="SSF81558">
    <property type="entry name" value="Photosystem I subunits PsaA/PsaB"/>
    <property type="match status" value="1"/>
</dbReference>
<dbReference type="PROSITE" id="PS00419">
    <property type="entry name" value="PHOTOSYSTEM_I_PSAAB"/>
    <property type="match status" value="1"/>
</dbReference>
<accession>P17154</accession>
<accession>B1XQQ3</accession>
<name>PSAA_PICP2</name>
<organism>
    <name type="scientific">Picosynechococcus sp. (strain ATCC 27264 / PCC 7002 / PR-6)</name>
    <name type="common">Agmenellum quadruplicatum</name>
    <dbReference type="NCBI Taxonomy" id="32049"/>
    <lineage>
        <taxon>Bacteria</taxon>
        <taxon>Bacillati</taxon>
        <taxon>Cyanobacteriota</taxon>
        <taxon>Cyanophyceae</taxon>
        <taxon>Oscillatoriophycideae</taxon>
        <taxon>Chroococcales</taxon>
        <taxon>Geminocystaceae</taxon>
        <taxon>Picosynechococcus</taxon>
    </lineage>
</organism>
<gene>
    <name evidence="1" type="primary">psaA</name>
    <name type="ordered locus">SYNPCC7002_A1961</name>
</gene>
<proteinExistence type="inferred from homology"/>
<keyword id="KW-0004">4Fe-4S</keyword>
<keyword id="KW-0148">Chlorophyll</keyword>
<keyword id="KW-0157">Chromophore</keyword>
<keyword id="KW-0249">Electron transport</keyword>
<keyword id="KW-0408">Iron</keyword>
<keyword id="KW-0411">Iron-sulfur</keyword>
<keyword id="KW-0460">Magnesium</keyword>
<keyword id="KW-0472">Membrane</keyword>
<keyword id="KW-0479">Metal-binding</keyword>
<keyword id="KW-0560">Oxidoreductase</keyword>
<keyword id="KW-0602">Photosynthesis</keyword>
<keyword id="KW-0603">Photosystem I</keyword>
<keyword id="KW-1185">Reference proteome</keyword>
<keyword id="KW-0793">Thylakoid</keyword>
<keyword id="KW-0812">Transmembrane</keyword>
<keyword id="KW-1133">Transmembrane helix</keyword>
<keyword id="KW-0813">Transport</keyword>
<comment type="function">
    <text evidence="1">PsaA and PsaB bind P700, the primary electron donor of photosystem I (PSI), as well as the electron acceptors A0, A1 and FX. PSI is a plastocyanin/cytochrome c6-ferredoxin oxidoreductase, converting photonic excitation into a charge separation, which transfers an electron from the donor P700 chlorophyll pair to the spectroscopically characterized acceptors A0, A1, FX, FA and FB in turn. Oxidized P700 is reduced on the lumenal side of the thylakoid membrane by plastocyanin or cytochrome c6.</text>
</comment>
<comment type="catalytic activity">
    <reaction evidence="1">
        <text>reduced [plastocyanin] + hnu + oxidized [2Fe-2S]-[ferredoxin] = oxidized [plastocyanin] + reduced [2Fe-2S]-[ferredoxin]</text>
        <dbReference type="Rhea" id="RHEA:30407"/>
        <dbReference type="Rhea" id="RHEA-COMP:10000"/>
        <dbReference type="Rhea" id="RHEA-COMP:10001"/>
        <dbReference type="Rhea" id="RHEA-COMP:10039"/>
        <dbReference type="Rhea" id="RHEA-COMP:10040"/>
        <dbReference type="ChEBI" id="CHEBI:29036"/>
        <dbReference type="ChEBI" id="CHEBI:30212"/>
        <dbReference type="ChEBI" id="CHEBI:33737"/>
        <dbReference type="ChEBI" id="CHEBI:33738"/>
        <dbReference type="ChEBI" id="CHEBI:49552"/>
        <dbReference type="EC" id="1.97.1.12"/>
    </reaction>
</comment>
<comment type="cofactor">
    <text evidence="1">PSI electron transfer chain: 5 chlorophyll a, 1 chlorophyll a', 2 phylloquinones and 3 4Fe-4S clusters. PSI core antenna: 90 chlorophyll a, 22 carotenoids, 3 phospholipids and 1 galactolipid. P700 is a chlorophyll a/chlorophyll a' dimer, A0 is one or more chlorophyll a, A1 is one or both phylloquinones and FX is a shared 4Fe-4S iron-sulfur center.</text>
</comment>
<comment type="subunit">
    <text evidence="1">The PsaA/B heterodimer binds the P700 chlorophyll special pair and subsequent electron acceptors. PSI consists of a core antenna complex that captures photons, and an electron transfer chain that converts photonic excitation into a charge separation. The cyanobacterial PSI reaction center is composed of one copy each of PsaA,B,C,D,E,F,I,J,K,L,M and X, and forms trimeric complexes.</text>
</comment>
<comment type="subcellular location">
    <subcellularLocation>
        <location evidence="1">Cellular thylakoid membrane</location>
        <topology evidence="1">Multi-pass membrane protein</topology>
    </subcellularLocation>
</comment>
<comment type="similarity">
    <text evidence="1">Belongs to the PsaA/PsaB family.</text>
</comment>
<reference key="1">
    <citation type="journal article" date="1987" name="Plant Mol. Biol.">
        <title>Molecular cloning and nucleotide sequence of the psaA and psaB genes of the cyanobacterium Synechococcus sp. PCC 7002.</title>
        <authorList>
            <person name="Cantrell A."/>
            <person name="Bryant D.A."/>
        </authorList>
    </citation>
    <scope>NUCLEOTIDE SEQUENCE [GENOMIC DNA]</scope>
</reference>
<reference key="2">
    <citation type="submission" date="2008-02" db="EMBL/GenBank/DDBJ databases">
        <title>Complete sequence of Synechococcus sp. PCC 7002.</title>
        <authorList>
            <person name="Li T."/>
            <person name="Zhao J."/>
            <person name="Zhao C."/>
            <person name="Liu Z."/>
            <person name="Zhao F."/>
            <person name="Marquardt J."/>
            <person name="Nomura C.T."/>
            <person name="Persson S."/>
            <person name="Detter J.C."/>
            <person name="Richardson P.M."/>
            <person name="Lanz C."/>
            <person name="Schuster S.C."/>
            <person name="Wang J."/>
            <person name="Li S."/>
            <person name="Huang X."/>
            <person name="Cai T."/>
            <person name="Yu Z."/>
            <person name="Luo J."/>
            <person name="Zhao J."/>
            <person name="Bryant D.A."/>
        </authorList>
    </citation>
    <scope>NUCLEOTIDE SEQUENCE [LARGE SCALE GENOMIC DNA]</scope>
    <source>
        <strain>ATCC 27264 / PCC 7002 / PR-6</strain>
    </source>
</reference>
<protein>
    <recommendedName>
        <fullName evidence="1">Photosystem I P700 chlorophyll a apoprotein A1</fullName>
        <ecNumber evidence="1">1.97.1.12</ecNumber>
    </recommendedName>
    <alternativeName>
        <fullName evidence="1">PsaA</fullName>
    </alternativeName>
</protein>
<sequence length="739" mass="81389">MAVKVDKDPVPTSFEKWGKPGHFDRTLARGPKTTTWIWNLHADAHDFDSQTSDLEDISRKIFSAHFGHLAVVFVWLSGMYFHGAKFSNYEAWLNNPTVIKPSAQVVWPVVGQGILNGDVGGGFSGIQITSGLFYLWRAAGFTNSYQLYVTAIGGLVMAALMVFAGWFHYHKAAPKLEWFQNAEAMMNHHLSVLLGCGSLGWTGHLIHVSLPVNKLLDSGVAAKDIPLPHEFFDASVMAELYPSFAQGLKPFFTLDWAAYSDFLTFKGGLNPTTGSLWLSDVAHHHLAIAVLFIIAGHMYRTGFGIGHSMKEILEAHKGPFTGEGHKGLYEILTTSWHAQLAVNLALLGSLTIVIAHHMYSMPPYPYMATDYGTQLSLFTHHTWIGGFLIVGAGAHGAIFMVRDYDPAKNVNNLLDRVIRHRDAIISHLNWVCIFLGFHSFGLYIHNDTMRALGRPQDMFSDSAIQLQPIFAQWIQNIHTLAPGGTAPNAIASASQVFGGDVVAIGNKVALMPITLGTADFMVHHIHAFTIHVTVLILLKGLLYSRSSRLVPDKGQLGFRFPCDGPGRGGTCQVSGWDHVFLGLFWMYNSLSIVIFHFSWKMQSDVWGTILPDGSVSHVTGGNFATSAITINGWLRDFLWAQSSQVINSYGSALSAYGIMFLAGHFVFAFSLMFLFSGRGYWQELIESIVWAHNKLKLAPAIQPRALSIVQGRAVGVAHYLLGGIVTTWAFFLARSLSIG</sequence>